<proteinExistence type="inferred from homology"/>
<name>PYRH_NITEC</name>
<protein>
    <recommendedName>
        <fullName evidence="1">Uridylate kinase</fullName>
        <shortName evidence="1">UK</shortName>
        <ecNumber evidence="1">2.7.4.22</ecNumber>
    </recommendedName>
    <alternativeName>
        <fullName evidence="1">Uridine monophosphate kinase</fullName>
        <shortName evidence="1">UMP kinase</shortName>
        <shortName evidence="1">UMPK</shortName>
    </alternativeName>
</protein>
<evidence type="ECO:0000255" key="1">
    <source>
        <dbReference type="HAMAP-Rule" id="MF_01220"/>
    </source>
</evidence>
<sequence>MPAVYKRILLKLSGEALMGDAQYGIDRTVVERIVVEIAGVLQLGVEVAIVVGGGNIFRGMKSAGDGMDRVTADYMGMLATTMNALALHDAMRRNGVVSRVQSALRIDQVVEPYIRGKALRYLNERKVVIFAAGTGNPFFTTDTAAALRGMEMNANIVLKATKVDGIYTSDPFENKDAQRFRNLTFDEAINKNLQVMDATALTLCRDQKLPINVFSIFKTGALKRVIMGEDEGTLVII</sequence>
<feature type="chain" id="PRO_0000323906" description="Uridylate kinase">
    <location>
        <begin position="1"/>
        <end position="237"/>
    </location>
</feature>
<feature type="binding site" evidence="1">
    <location>
        <begin position="11"/>
        <end position="14"/>
    </location>
    <ligand>
        <name>ATP</name>
        <dbReference type="ChEBI" id="CHEBI:30616"/>
    </ligand>
</feature>
<feature type="binding site" evidence="1">
    <location>
        <position position="53"/>
    </location>
    <ligand>
        <name>UMP</name>
        <dbReference type="ChEBI" id="CHEBI:57865"/>
    </ligand>
</feature>
<feature type="binding site" evidence="1">
    <location>
        <position position="54"/>
    </location>
    <ligand>
        <name>ATP</name>
        <dbReference type="ChEBI" id="CHEBI:30616"/>
    </ligand>
</feature>
<feature type="binding site" evidence="1">
    <location>
        <position position="58"/>
    </location>
    <ligand>
        <name>ATP</name>
        <dbReference type="ChEBI" id="CHEBI:30616"/>
    </ligand>
</feature>
<feature type="binding site" evidence="1">
    <location>
        <position position="73"/>
    </location>
    <ligand>
        <name>UMP</name>
        <dbReference type="ChEBI" id="CHEBI:57865"/>
    </ligand>
</feature>
<feature type="binding site" evidence="1">
    <location>
        <begin position="134"/>
        <end position="141"/>
    </location>
    <ligand>
        <name>UMP</name>
        <dbReference type="ChEBI" id="CHEBI:57865"/>
    </ligand>
</feature>
<feature type="binding site" evidence="1">
    <location>
        <position position="161"/>
    </location>
    <ligand>
        <name>ATP</name>
        <dbReference type="ChEBI" id="CHEBI:30616"/>
    </ligand>
</feature>
<feature type="binding site" evidence="1">
    <location>
        <position position="167"/>
    </location>
    <ligand>
        <name>ATP</name>
        <dbReference type="ChEBI" id="CHEBI:30616"/>
    </ligand>
</feature>
<feature type="binding site" evidence="1">
    <location>
        <position position="170"/>
    </location>
    <ligand>
        <name>ATP</name>
        <dbReference type="ChEBI" id="CHEBI:30616"/>
    </ligand>
</feature>
<gene>
    <name evidence="1" type="primary">pyrH</name>
    <name type="ordered locus">Neut_2033</name>
</gene>
<comment type="function">
    <text evidence="1">Catalyzes the reversible phosphorylation of UMP to UDP.</text>
</comment>
<comment type="catalytic activity">
    <reaction evidence="1">
        <text>UMP + ATP = UDP + ADP</text>
        <dbReference type="Rhea" id="RHEA:24400"/>
        <dbReference type="ChEBI" id="CHEBI:30616"/>
        <dbReference type="ChEBI" id="CHEBI:57865"/>
        <dbReference type="ChEBI" id="CHEBI:58223"/>
        <dbReference type="ChEBI" id="CHEBI:456216"/>
        <dbReference type="EC" id="2.7.4.22"/>
    </reaction>
</comment>
<comment type="activity regulation">
    <text evidence="1">Inhibited by UTP.</text>
</comment>
<comment type="pathway">
    <text evidence="1">Pyrimidine metabolism; CTP biosynthesis via de novo pathway; UDP from UMP (UMPK route): step 1/1.</text>
</comment>
<comment type="subunit">
    <text evidence="1">Homohexamer.</text>
</comment>
<comment type="subcellular location">
    <subcellularLocation>
        <location evidence="1">Cytoplasm</location>
    </subcellularLocation>
</comment>
<comment type="similarity">
    <text evidence="1">Belongs to the UMP kinase family.</text>
</comment>
<organism>
    <name type="scientific">Nitrosomonas eutropha (strain DSM 101675 / C91 / Nm57)</name>
    <dbReference type="NCBI Taxonomy" id="335283"/>
    <lineage>
        <taxon>Bacteria</taxon>
        <taxon>Pseudomonadati</taxon>
        <taxon>Pseudomonadota</taxon>
        <taxon>Betaproteobacteria</taxon>
        <taxon>Nitrosomonadales</taxon>
        <taxon>Nitrosomonadaceae</taxon>
        <taxon>Nitrosomonas</taxon>
    </lineage>
</organism>
<reference key="1">
    <citation type="journal article" date="2007" name="Environ. Microbiol.">
        <title>Whole-genome analysis of the ammonia-oxidizing bacterium, Nitrosomonas eutropha C91: implications for niche adaptation.</title>
        <authorList>
            <person name="Stein L.Y."/>
            <person name="Arp D.J."/>
            <person name="Berube P.M."/>
            <person name="Chain P.S."/>
            <person name="Hauser L."/>
            <person name="Jetten M.S."/>
            <person name="Klotz M.G."/>
            <person name="Larimer F.W."/>
            <person name="Norton J.M."/>
            <person name="Op den Camp H.J.M."/>
            <person name="Shin M."/>
            <person name="Wei X."/>
        </authorList>
    </citation>
    <scope>NUCLEOTIDE SEQUENCE [LARGE SCALE GENOMIC DNA]</scope>
    <source>
        <strain>DSM 101675 / C91 / Nm57</strain>
    </source>
</reference>
<keyword id="KW-0067">ATP-binding</keyword>
<keyword id="KW-0963">Cytoplasm</keyword>
<keyword id="KW-0418">Kinase</keyword>
<keyword id="KW-0547">Nucleotide-binding</keyword>
<keyword id="KW-0665">Pyrimidine biosynthesis</keyword>
<keyword id="KW-0808">Transferase</keyword>
<dbReference type="EC" id="2.7.4.22" evidence="1"/>
<dbReference type="EMBL" id="CP000450">
    <property type="protein sequence ID" value="ABI60256.1"/>
    <property type="molecule type" value="Genomic_DNA"/>
</dbReference>
<dbReference type="RefSeq" id="WP_011635053.1">
    <property type="nucleotide sequence ID" value="NC_008344.1"/>
</dbReference>
<dbReference type="SMR" id="Q0AEH6"/>
<dbReference type="STRING" id="335283.Neut_2033"/>
<dbReference type="KEGG" id="net:Neut_2033"/>
<dbReference type="eggNOG" id="COG0528">
    <property type="taxonomic scope" value="Bacteria"/>
</dbReference>
<dbReference type="HOGENOM" id="CLU_033861_0_0_4"/>
<dbReference type="OrthoDB" id="9807458at2"/>
<dbReference type="UniPathway" id="UPA00159">
    <property type="reaction ID" value="UER00275"/>
</dbReference>
<dbReference type="Proteomes" id="UP000001966">
    <property type="component" value="Chromosome"/>
</dbReference>
<dbReference type="GO" id="GO:0005829">
    <property type="term" value="C:cytosol"/>
    <property type="evidence" value="ECO:0007669"/>
    <property type="project" value="TreeGrafter"/>
</dbReference>
<dbReference type="GO" id="GO:0005524">
    <property type="term" value="F:ATP binding"/>
    <property type="evidence" value="ECO:0007669"/>
    <property type="project" value="UniProtKB-KW"/>
</dbReference>
<dbReference type="GO" id="GO:0033862">
    <property type="term" value="F:UMP kinase activity"/>
    <property type="evidence" value="ECO:0007669"/>
    <property type="project" value="UniProtKB-EC"/>
</dbReference>
<dbReference type="GO" id="GO:0044210">
    <property type="term" value="P:'de novo' CTP biosynthetic process"/>
    <property type="evidence" value="ECO:0007669"/>
    <property type="project" value="UniProtKB-UniRule"/>
</dbReference>
<dbReference type="GO" id="GO:0006225">
    <property type="term" value="P:UDP biosynthetic process"/>
    <property type="evidence" value="ECO:0007669"/>
    <property type="project" value="TreeGrafter"/>
</dbReference>
<dbReference type="CDD" id="cd04254">
    <property type="entry name" value="AAK_UMPK-PyrH-Ec"/>
    <property type="match status" value="1"/>
</dbReference>
<dbReference type="FunFam" id="3.40.1160.10:FF:000001">
    <property type="entry name" value="Uridylate kinase"/>
    <property type="match status" value="1"/>
</dbReference>
<dbReference type="Gene3D" id="3.40.1160.10">
    <property type="entry name" value="Acetylglutamate kinase-like"/>
    <property type="match status" value="1"/>
</dbReference>
<dbReference type="HAMAP" id="MF_01220_B">
    <property type="entry name" value="PyrH_B"/>
    <property type="match status" value="1"/>
</dbReference>
<dbReference type="InterPro" id="IPR036393">
    <property type="entry name" value="AceGlu_kinase-like_sf"/>
</dbReference>
<dbReference type="InterPro" id="IPR001048">
    <property type="entry name" value="Asp/Glu/Uridylate_kinase"/>
</dbReference>
<dbReference type="InterPro" id="IPR011817">
    <property type="entry name" value="Uridylate_kinase"/>
</dbReference>
<dbReference type="InterPro" id="IPR015963">
    <property type="entry name" value="Uridylate_kinase_bac"/>
</dbReference>
<dbReference type="NCBIfam" id="TIGR02075">
    <property type="entry name" value="pyrH_bact"/>
    <property type="match status" value="1"/>
</dbReference>
<dbReference type="PANTHER" id="PTHR42833">
    <property type="entry name" value="URIDYLATE KINASE"/>
    <property type="match status" value="1"/>
</dbReference>
<dbReference type="PANTHER" id="PTHR42833:SF4">
    <property type="entry name" value="URIDYLATE KINASE PUMPKIN, CHLOROPLASTIC"/>
    <property type="match status" value="1"/>
</dbReference>
<dbReference type="Pfam" id="PF00696">
    <property type="entry name" value="AA_kinase"/>
    <property type="match status" value="1"/>
</dbReference>
<dbReference type="PIRSF" id="PIRSF005650">
    <property type="entry name" value="Uridylate_kin"/>
    <property type="match status" value="1"/>
</dbReference>
<dbReference type="SUPFAM" id="SSF53633">
    <property type="entry name" value="Carbamate kinase-like"/>
    <property type="match status" value="1"/>
</dbReference>
<accession>Q0AEH6</accession>